<keyword id="KW-0496">Mitochondrion</keyword>
<keyword id="KW-1185">Reference proteome</keyword>
<keyword id="KW-0687">Ribonucleoprotein</keyword>
<keyword id="KW-0689">Ribosomal protein</keyword>
<keyword id="KW-0809">Transit peptide</keyword>
<dbReference type="EMBL" id="BC103008">
    <property type="protein sequence ID" value="AAI03009.1"/>
    <property type="molecule type" value="mRNA"/>
</dbReference>
<dbReference type="EMBL" id="BT025388">
    <property type="protein sequence ID" value="ABF57344.1"/>
    <property type="molecule type" value="mRNA"/>
</dbReference>
<dbReference type="RefSeq" id="NP_001179320.1">
    <property type="nucleotide sequence ID" value="NM_001192391.1"/>
</dbReference>
<dbReference type="SMR" id="Q3SZA9"/>
<dbReference type="FunCoup" id="Q3SZA9">
    <property type="interactions" value="1625"/>
</dbReference>
<dbReference type="STRING" id="9913.ENSBTAP00000006331"/>
<dbReference type="PaxDb" id="9913-ENSBTAP00000006331"/>
<dbReference type="Ensembl" id="ENSBTAT00000006331.5">
    <property type="protein sequence ID" value="ENSBTAP00000006331.4"/>
    <property type="gene ID" value="ENSBTAG00000004823.6"/>
</dbReference>
<dbReference type="GeneID" id="540278"/>
<dbReference type="KEGG" id="bta:540278"/>
<dbReference type="CTD" id="51318"/>
<dbReference type="VEuPathDB" id="HostDB:ENSBTAG00000004823"/>
<dbReference type="VGNC" id="VGNC:31632">
    <property type="gene designation" value="MRPL35"/>
</dbReference>
<dbReference type="eggNOG" id="KOG4316">
    <property type="taxonomic scope" value="Eukaryota"/>
</dbReference>
<dbReference type="GeneTree" id="ENSGT00390000007547"/>
<dbReference type="HOGENOM" id="CLU_123951_0_0_1"/>
<dbReference type="InParanoid" id="Q3SZA9"/>
<dbReference type="OMA" id="TYCSTRK"/>
<dbReference type="OrthoDB" id="5847109at2759"/>
<dbReference type="TreeFam" id="TF317642"/>
<dbReference type="Reactome" id="R-BTA-5389840">
    <property type="pathway name" value="Mitochondrial translation elongation"/>
</dbReference>
<dbReference type="Reactome" id="R-BTA-5419276">
    <property type="pathway name" value="Mitochondrial translation termination"/>
</dbReference>
<dbReference type="Proteomes" id="UP000009136">
    <property type="component" value="Chromosome 11"/>
</dbReference>
<dbReference type="Bgee" id="ENSBTAG00000004823">
    <property type="expression patterns" value="Expressed in semen and 104 other cell types or tissues"/>
</dbReference>
<dbReference type="GO" id="GO:0005743">
    <property type="term" value="C:mitochondrial inner membrane"/>
    <property type="evidence" value="ECO:0000304"/>
    <property type="project" value="Reactome"/>
</dbReference>
<dbReference type="GO" id="GO:0005739">
    <property type="term" value="C:mitochondrion"/>
    <property type="evidence" value="ECO:0000318"/>
    <property type="project" value="GO_Central"/>
</dbReference>
<dbReference type="GO" id="GO:1990904">
    <property type="term" value="C:ribonucleoprotein complex"/>
    <property type="evidence" value="ECO:0007669"/>
    <property type="project" value="UniProtKB-KW"/>
</dbReference>
<dbReference type="GO" id="GO:0005840">
    <property type="term" value="C:ribosome"/>
    <property type="evidence" value="ECO:0007669"/>
    <property type="project" value="UniProtKB-KW"/>
</dbReference>
<dbReference type="GO" id="GO:0003735">
    <property type="term" value="F:structural constituent of ribosome"/>
    <property type="evidence" value="ECO:0007669"/>
    <property type="project" value="InterPro"/>
</dbReference>
<dbReference type="GO" id="GO:0006412">
    <property type="term" value="P:translation"/>
    <property type="evidence" value="ECO:0007669"/>
    <property type="project" value="InterPro"/>
</dbReference>
<dbReference type="Gene3D" id="4.10.410.60">
    <property type="match status" value="1"/>
</dbReference>
<dbReference type="InterPro" id="IPR021137">
    <property type="entry name" value="Ribosomal_bL35-like"/>
</dbReference>
<dbReference type="InterPro" id="IPR037229">
    <property type="entry name" value="Ribosomal_bL35_sf"/>
</dbReference>
<dbReference type="InterPro" id="IPR019338">
    <property type="entry name" value="Ribosomal_bL35m"/>
</dbReference>
<dbReference type="PANTHER" id="PTHR15909">
    <property type="entry name" value="39S RIBOSOMAL PROTEIN L35, MITOCHONDRIAL"/>
    <property type="match status" value="1"/>
</dbReference>
<dbReference type="PANTHER" id="PTHR15909:SF0">
    <property type="entry name" value="LARGE RIBOSOMAL SUBUNIT PROTEIN BL35M"/>
    <property type="match status" value="1"/>
</dbReference>
<dbReference type="Pfam" id="PF01632">
    <property type="entry name" value="Ribosomal_L35p"/>
    <property type="match status" value="1"/>
</dbReference>
<dbReference type="SUPFAM" id="SSF143034">
    <property type="entry name" value="L35p-like"/>
    <property type="match status" value="1"/>
</dbReference>
<name>RM35_BOVIN</name>
<accession>Q3SZA9</accession>
<accession>Q1JPG5</accession>
<proteinExistence type="evidence at transcript level"/>
<evidence type="ECO:0000250" key="1"/>
<evidence type="ECO:0000255" key="2"/>
<evidence type="ECO:0000305" key="3"/>
<reference key="1">
    <citation type="submission" date="2005-08" db="EMBL/GenBank/DDBJ databases">
        <authorList>
            <consortium name="NIH - Mammalian Gene Collection (MGC) project"/>
        </authorList>
    </citation>
    <scope>NUCLEOTIDE SEQUENCE [LARGE SCALE MRNA]</scope>
    <source>
        <strain>Crossbred X Angus</strain>
        <tissue>Ileum</tissue>
    </source>
</reference>
<reference key="2">
    <citation type="journal article" date="2005" name="BMC Genomics">
        <title>Characterization of 954 bovine full-CDS cDNA sequences.</title>
        <authorList>
            <person name="Harhay G.P."/>
            <person name="Sonstegard T.S."/>
            <person name="Keele J.W."/>
            <person name="Heaton M.P."/>
            <person name="Clawson M.L."/>
            <person name="Snelling W.M."/>
            <person name="Wiedmann R.T."/>
            <person name="Van Tassell C.P."/>
            <person name="Smith T.P.L."/>
        </authorList>
    </citation>
    <scope>NUCLEOTIDE SEQUENCE [LARGE SCALE MRNA] OF 2-188</scope>
</reference>
<gene>
    <name type="primary">MRPL35</name>
</gene>
<protein>
    <recommendedName>
        <fullName evidence="3">Large ribosomal subunit protein bL35m</fullName>
    </recommendedName>
    <alternativeName>
        <fullName>39S ribosomal protein L35, mitochondrial</fullName>
        <shortName>L35mt</shortName>
        <shortName>MRP-L35</shortName>
    </alternativeName>
</protein>
<sequence>MAASMFAGAVRAASGILRPLNILASSAYRNCTKNACLNSILSSRHFSHIQTPVVSSAPRLITSVRNLTCGQTATVLNRMALLLPNVLKPPVRTVTYCSSRKGKRKTVKAVIYRFLRLHSGLWLRRKAGYKKKLWKKTVARKRRLREFVFCNKTQSKLLDKMTTSFWKRRNWYADDPYQMYHDRTNLKV</sequence>
<comment type="subcellular location">
    <subcellularLocation>
        <location evidence="1">Mitochondrion</location>
    </subcellularLocation>
</comment>
<comment type="similarity">
    <text evidence="3">Belongs to the bacterial ribosomal protein bL35 family.</text>
</comment>
<feature type="transit peptide" description="Mitochondrion" evidence="2">
    <location>
        <begin position="1"/>
        <end status="unknown"/>
    </location>
</feature>
<feature type="chain" id="PRO_0000273552" description="Large ribosomal subunit protein bL35m">
    <location>
        <begin status="unknown"/>
        <end position="188"/>
    </location>
</feature>
<feature type="sequence conflict" description="In Ref. 1; AAI03009." evidence="3" ref="1">
    <original>M</original>
    <variation>W</variation>
    <location>
        <position position="1"/>
    </location>
</feature>
<feature type="sequence conflict" description="In Ref. 2; ABF57344." evidence="3" ref="2">
    <original>I</original>
    <variation>V</variation>
    <location>
        <position position="40"/>
    </location>
</feature>
<organism>
    <name type="scientific">Bos taurus</name>
    <name type="common">Bovine</name>
    <dbReference type="NCBI Taxonomy" id="9913"/>
    <lineage>
        <taxon>Eukaryota</taxon>
        <taxon>Metazoa</taxon>
        <taxon>Chordata</taxon>
        <taxon>Craniata</taxon>
        <taxon>Vertebrata</taxon>
        <taxon>Euteleostomi</taxon>
        <taxon>Mammalia</taxon>
        <taxon>Eutheria</taxon>
        <taxon>Laurasiatheria</taxon>
        <taxon>Artiodactyla</taxon>
        <taxon>Ruminantia</taxon>
        <taxon>Pecora</taxon>
        <taxon>Bovidae</taxon>
        <taxon>Bovinae</taxon>
        <taxon>Bos</taxon>
    </lineage>
</organism>